<evidence type="ECO:0000255" key="1">
    <source>
        <dbReference type="HAMAP-Rule" id="MF_00719"/>
    </source>
</evidence>
<keyword id="KW-0997">Cell inner membrane</keyword>
<keyword id="KW-1003">Cell membrane</keyword>
<keyword id="KW-0169">Cobalamin biosynthesis</keyword>
<keyword id="KW-0460">Magnesium</keyword>
<keyword id="KW-0472">Membrane</keyword>
<keyword id="KW-1185">Reference proteome</keyword>
<keyword id="KW-0808">Transferase</keyword>
<keyword id="KW-0812">Transmembrane</keyword>
<keyword id="KW-1133">Transmembrane helix</keyword>
<reference key="1">
    <citation type="submission" date="2007-04" db="EMBL/GenBank/DDBJ databases">
        <title>Complete genome sequence of the nitrogen-fixing bacterium Azorhizobium caulinodans ORS571.</title>
        <authorList>
            <person name="Lee K.B."/>
            <person name="Backer P.D."/>
            <person name="Aono T."/>
            <person name="Liu C.T."/>
            <person name="Suzuki S."/>
            <person name="Suzuki T."/>
            <person name="Kaneko T."/>
            <person name="Yamada M."/>
            <person name="Tabata S."/>
            <person name="Kupfer D.M."/>
            <person name="Najar F.Z."/>
            <person name="Wiley G.B."/>
            <person name="Roe B."/>
            <person name="Binnewies T."/>
            <person name="Ussery D."/>
            <person name="Vereecke D."/>
            <person name="Gevers D."/>
            <person name="Holsters M."/>
            <person name="Oyaizu H."/>
        </authorList>
    </citation>
    <scope>NUCLEOTIDE SEQUENCE [LARGE SCALE GENOMIC DNA]</scope>
    <source>
        <strain>ATCC 43989 / DSM 5975 / JCM 20966 / LMG 6465 / NBRC 14845 / NCIMB 13405 / ORS 571</strain>
    </source>
</reference>
<feature type="chain" id="PRO_1000072776" description="Adenosylcobinamide-GDP ribazoletransferase">
    <location>
        <begin position="1"/>
        <end position="264"/>
    </location>
</feature>
<feature type="transmembrane region" description="Helical" evidence="1">
    <location>
        <begin position="39"/>
        <end position="59"/>
    </location>
</feature>
<feature type="transmembrane region" description="Helical" evidence="1">
    <location>
        <begin position="63"/>
        <end position="83"/>
    </location>
</feature>
<feature type="transmembrane region" description="Helical" evidence="1">
    <location>
        <begin position="121"/>
        <end position="141"/>
    </location>
</feature>
<feature type="transmembrane region" description="Helical" evidence="1">
    <location>
        <begin position="148"/>
        <end position="168"/>
    </location>
</feature>
<feature type="transmembrane region" description="Helical" evidence="1">
    <location>
        <begin position="201"/>
        <end position="221"/>
    </location>
</feature>
<feature type="transmembrane region" description="Helical" evidence="1">
    <location>
        <begin position="241"/>
        <end position="261"/>
    </location>
</feature>
<gene>
    <name evidence="1" type="primary">cobS</name>
    <name type="ordered locus">AZC_2896</name>
</gene>
<protein>
    <recommendedName>
        <fullName evidence="1">Adenosylcobinamide-GDP ribazoletransferase</fullName>
        <ecNumber evidence="1">2.7.8.26</ecNumber>
    </recommendedName>
    <alternativeName>
        <fullName evidence="1">Cobalamin synthase</fullName>
    </alternativeName>
    <alternativeName>
        <fullName evidence="1">Cobalamin-5'-phosphate synthase</fullName>
    </alternativeName>
</protein>
<proteinExistence type="inferred from homology"/>
<dbReference type="EC" id="2.7.8.26" evidence="1"/>
<dbReference type="EMBL" id="AP009384">
    <property type="protein sequence ID" value="BAF88894.1"/>
    <property type="molecule type" value="Genomic_DNA"/>
</dbReference>
<dbReference type="RefSeq" id="WP_012171420.1">
    <property type="nucleotide sequence ID" value="NC_009937.1"/>
</dbReference>
<dbReference type="STRING" id="438753.AZC_2896"/>
<dbReference type="KEGG" id="azc:AZC_2896"/>
<dbReference type="eggNOG" id="COG0368">
    <property type="taxonomic scope" value="Bacteria"/>
</dbReference>
<dbReference type="HOGENOM" id="CLU_057426_1_1_5"/>
<dbReference type="UniPathway" id="UPA00148">
    <property type="reaction ID" value="UER00238"/>
</dbReference>
<dbReference type="Proteomes" id="UP000000270">
    <property type="component" value="Chromosome"/>
</dbReference>
<dbReference type="GO" id="GO:0005886">
    <property type="term" value="C:plasma membrane"/>
    <property type="evidence" value="ECO:0007669"/>
    <property type="project" value="UniProtKB-SubCell"/>
</dbReference>
<dbReference type="GO" id="GO:0051073">
    <property type="term" value="F:adenosylcobinamide-GDP ribazoletransferase activity"/>
    <property type="evidence" value="ECO:0007669"/>
    <property type="project" value="UniProtKB-UniRule"/>
</dbReference>
<dbReference type="GO" id="GO:0008818">
    <property type="term" value="F:cobalamin 5'-phosphate synthase activity"/>
    <property type="evidence" value="ECO:0007669"/>
    <property type="project" value="UniProtKB-UniRule"/>
</dbReference>
<dbReference type="GO" id="GO:0009236">
    <property type="term" value="P:cobalamin biosynthetic process"/>
    <property type="evidence" value="ECO:0007669"/>
    <property type="project" value="UniProtKB-UniRule"/>
</dbReference>
<dbReference type="HAMAP" id="MF_00719">
    <property type="entry name" value="CobS"/>
    <property type="match status" value="1"/>
</dbReference>
<dbReference type="InterPro" id="IPR003805">
    <property type="entry name" value="CobS"/>
</dbReference>
<dbReference type="NCBIfam" id="TIGR00317">
    <property type="entry name" value="cobS"/>
    <property type="match status" value="1"/>
</dbReference>
<dbReference type="PANTHER" id="PTHR34148">
    <property type="entry name" value="ADENOSYLCOBINAMIDE-GDP RIBAZOLETRANSFERASE"/>
    <property type="match status" value="1"/>
</dbReference>
<dbReference type="PANTHER" id="PTHR34148:SF1">
    <property type="entry name" value="ADENOSYLCOBINAMIDE-GDP RIBAZOLETRANSFERASE"/>
    <property type="match status" value="1"/>
</dbReference>
<dbReference type="Pfam" id="PF02654">
    <property type="entry name" value="CobS"/>
    <property type="match status" value="1"/>
</dbReference>
<organism>
    <name type="scientific">Azorhizobium caulinodans (strain ATCC 43989 / DSM 5975 / JCM 20966 / LMG 6465 / NBRC 14845 / NCIMB 13405 / ORS 571)</name>
    <dbReference type="NCBI Taxonomy" id="438753"/>
    <lineage>
        <taxon>Bacteria</taxon>
        <taxon>Pseudomonadati</taxon>
        <taxon>Pseudomonadota</taxon>
        <taxon>Alphaproteobacteria</taxon>
        <taxon>Hyphomicrobiales</taxon>
        <taxon>Xanthobacteraceae</taxon>
        <taxon>Azorhizobium</taxon>
    </lineage>
</organism>
<comment type="function">
    <text evidence="1">Joins adenosylcobinamide-GDP and alpha-ribazole to generate adenosylcobalamin (Ado-cobalamin). Also synthesizes adenosylcobalamin 5'-phosphate from adenosylcobinamide-GDP and alpha-ribazole 5'-phosphate.</text>
</comment>
<comment type="catalytic activity">
    <reaction evidence="1">
        <text>alpha-ribazole + adenosylcob(III)inamide-GDP = adenosylcob(III)alamin + GMP + H(+)</text>
        <dbReference type="Rhea" id="RHEA:16049"/>
        <dbReference type="ChEBI" id="CHEBI:10329"/>
        <dbReference type="ChEBI" id="CHEBI:15378"/>
        <dbReference type="ChEBI" id="CHEBI:18408"/>
        <dbReference type="ChEBI" id="CHEBI:58115"/>
        <dbReference type="ChEBI" id="CHEBI:60487"/>
        <dbReference type="EC" id="2.7.8.26"/>
    </reaction>
</comment>
<comment type="catalytic activity">
    <reaction evidence="1">
        <text>alpha-ribazole 5'-phosphate + adenosylcob(III)inamide-GDP = adenosylcob(III)alamin 5'-phosphate + GMP + H(+)</text>
        <dbReference type="Rhea" id="RHEA:23560"/>
        <dbReference type="ChEBI" id="CHEBI:15378"/>
        <dbReference type="ChEBI" id="CHEBI:57918"/>
        <dbReference type="ChEBI" id="CHEBI:58115"/>
        <dbReference type="ChEBI" id="CHEBI:60487"/>
        <dbReference type="ChEBI" id="CHEBI:60493"/>
        <dbReference type="EC" id="2.7.8.26"/>
    </reaction>
</comment>
<comment type="cofactor">
    <cofactor evidence="1">
        <name>Mg(2+)</name>
        <dbReference type="ChEBI" id="CHEBI:18420"/>
    </cofactor>
</comment>
<comment type="pathway">
    <text evidence="1">Cofactor biosynthesis; adenosylcobalamin biosynthesis; adenosylcobalamin from cob(II)yrinate a,c-diamide: step 7/7.</text>
</comment>
<comment type="subcellular location">
    <subcellularLocation>
        <location evidence="1">Cell inner membrane</location>
        <topology evidence="1">Multi-pass membrane protein</topology>
    </subcellularLocation>
</comment>
<comment type="similarity">
    <text evidence="1">Belongs to the CobS family.</text>
</comment>
<accession>A8ID91</accession>
<name>COBS_AZOC5</name>
<sequence length="264" mass="26540">MRHSRILADVGAALRFYSRIPVPAGAAEDAFAPPDLKRIAYAVPLAGAAIGLAGAAILIGAHALGLPNLVAAILAVLTCVLLTGALHEDGLADTADGFGGGASRLRRLEIMRDSRIGSYGACALVFSLLLRVALLDGLLALSPTRAALALIAAASLSRAAGMLLLEFLPPARADGASAAAGQPGADAAVRSALVGALLATLLIVPSTGVGATLMAIGLSVLALFAMTRLSNRLIGGQTGDVAGAVQQLCEIAFLMGVLIYARPH</sequence>